<proteinExistence type="evidence at protein level"/>
<reference key="1">
    <citation type="journal article" date="1993" name="J. Biol. Chem.">
        <title>3-hydroxy-3-methylglutaryl coenzyme A lyase (HL). Cloning of human and chicken liver HL cDNAs and characterization of a mutation causing human HL deficiency.</title>
        <authorList>
            <person name="Mitchell G.A."/>
            <person name="Robert M.-F."/>
            <person name="Hruz P.W."/>
            <person name="Wang S."/>
            <person name="Fontaine G."/>
            <person name="Behnke C.E."/>
            <person name="Mende-Mueller L.M."/>
            <person name="Schappert K."/>
            <person name="Lee C."/>
            <person name="Gibson K.M."/>
            <person name="Miziorko H.M."/>
        </authorList>
    </citation>
    <scope>NUCLEOTIDE SEQUENCE [MRNA] (ISOFORM 1)</scope>
    <source>
        <tissue>Liver</tissue>
    </source>
</reference>
<reference key="2">
    <citation type="submission" date="2003-08" db="EMBL/GenBank/DDBJ databases">
        <title>Cloning of human full-length CDSs in BD Creator(TM) system donor vector.</title>
        <authorList>
            <person name="Kalnine N."/>
            <person name="Chen X."/>
            <person name="Rolfs A."/>
            <person name="Halleck A."/>
            <person name="Hines L."/>
            <person name="Eisenstein S."/>
            <person name="Koundinya M."/>
            <person name="Raphael J."/>
            <person name="Moreira D."/>
            <person name="Kelley T."/>
            <person name="LaBaer J."/>
            <person name="Lin Y."/>
            <person name="Phelan M."/>
            <person name="Farmer A."/>
        </authorList>
    </citation>
    <scope>NUCLEOTIDE SEQUENCE [LARGE SCALE MRNA] (ISOFORM 1)</scope>
</reference>
<reference key="3">
    <citation type="journal article" date="2004" name="Nat. Genet.">
        <title>Complete sequencing and characterization of 21,243 full-length human cDNAs.</title>
        <authorList>
            <person name="Ota T."/>
            <person name="Suzuki Y."/>
            <person name="Nishikawa T."/>
            <person name="Otsuki T."/>
            <person name="Sugiyama T."/>
            <person name="Irie R."/>
            <person name="Wakamatsu A."/>
            <person name="Hayashi K."/>
            <person name="Sato H."/>
            <person name="Nagai K."/>
            <person name="Kimura K."/>
            <person name="Makita H."/>
            <person name="Sekine M."/>
            <person name="Obayashi M."/>
            <person name="Nishi T."/>
            <person name="Shibahara T."/>
            <person name="Tanaka T."/>
            <person name="Ishii S."/>
            <person name="Yamamoto J."/>
            <person name="Saito K."/>
            <person name="Kawai Y."/>
            <person name="Isono Y."/>
            <person name="Nakamura Y."/>
            <person name="Nagahari K."/>
            <person name="Murakami K."/>
            <person name="Yasuda T."/>
            <person name="Iwayanagi T."/>
            <person name="Wagatsuma M."/>
            <person name="Shiratori A."/>
            <person name="Sudo H."/>
            <person name="Hosoiri T."/>
            <person name="Kaku Y."/>
            <person name="Kodaira H."/>
            <person name="Kondo H."/>
            <person name="Sugawara M."/>
            <person name="Takahashi M."/>
            <person name="Kanda K."/>
            <person name="Yokoi T."/>
            <person name="Furuya T."/>
            <person name="Kikkawa E."/>
            <person name="Omura Y."/>
            <person name="Abe K."/>
            <person name="Kamihara K."/>
            <person name="Katsuta N."/>
            <person name="Sato K."/>
            <person name="Tanikawa M."/>
            <person name="Yamazaki M."/>
            <person name="Ninomiya K."/>
            <person name="Ishibashi T."/>
            <person name="Yamashita H."/>
            <person name="Murakawa K."/>
            <person name="Fujimori K."/>
            <person name="Tanai H."/>
            <person name="Kimata M."/>
            <person name="Watanabe M."/>
            <person name="Hiraoka S."/>
            <person name="Chiba Y."/>
            <person name="Ishida S."/>
            <person name="Ono Y."/>
            <person name="Takiguchi S."/>
            <person name="Watanabe S."/>
            <person name="Yosida M."/>
            <person name="Hotuta T."/>
            <person name="Kusano J."/>
            <person name="Kanehori K."/>
            <person name="Takahashi-Fujii A."/>
            <person name="Hara H."/>
            <person name="Tanase T.-O."/>
            <person name="Nomura Y."/>
            <person name="Togiya S."/>
            <person name="Komai F."/>
            <person name="Hara R."/>
            <person name="Takeuchi K."/>
            <person name="Arita M."/>
            <person name="Imose N."/>
            <person name="Musashino K."/>
            <person name="Yuuki H."/>
            <person name="Oshima A."/>
            <person name="Sasaki N."/>
            <person name="Aotsuka S."/>
            <person name="Yoshikawa Y."/>
            <person name="Matsunawa H."/>
            <person name="Ichihara T."/>
            <person name="Shiohata N."/>
            <person name="Sano S."/>
            <person name="Moriya S."/>
            <person name="Momiyama H."/>
            <person name="Satoh N."/>
            <person name="Takami S."/>
            <person name="Terashima Y."/>
            <person name="Suzuki O."/>
            <person name="Nakagawa S."/>
            <person name="Senoh A."/>
            <person name="Mizoguchi H."/>
            <person name="Goto Y."/>
            <person name="Shimizu F."/>
            <person name="Wakebe H."/>
            <person name="Hishigaki H."/>
            <person name="Watanabe T."/>
            <person name="Sugiyama A."/>
            <person name="Takemoto M."/>
            <person name="Kawakami B."/>
            <person name="Yamazaki M."/>
            <person name="Watanabe K."/>
            <person name="Kumagai A."/>
            <person name="Itakura S."/>
            <person name="Fukuzumi Y."/>
            <person name="Fujimori Y."/>
            <person name="Komiyama M."/>
            <person name="Tashiro H."/>
            <person name="Tanigami A."/>
            <person name="Fujiwara T."/>
            <person name="Ono T."/>
            <person name="Yamada K."/>
            <person name="Fujii Y."/>
            <person name="Ozaki K."/>
            <person name="Hirao M."/>
            <person name="Ohmori Y."/>
            <person name="Kawabata A."/>
            <person name="Hikiji T."/>
            <person name="Kobatake N."/>
            <person name="Inagaki H."/>
            <person name="Ikema Y."/>
            <person name="Okamoto S."/>
            <person name="Okitani R."/>
            <person name="Kawakami T."/>
            <person name="Noguchi S."/>
            <person name="Itoh T."/>
            <person name="Shigeta K."/>
            <person name="Senba T."/>
            <person name="Matsumura K."/>
            <person name="Nakajima Y."/>
            <person name="Mizuno T."/>
            <person name="Morinaga M."/>
            <person name="Sasaki M."/>
            <person name="Togashi T."/>
            <person name="Oyama M."/>
            <person name="Hata H."/>
            <person name="Watanabe M."/>
            <person name="Komatsu T."/>
            <person name="Mizushima-Sugano J."/>
            <person name="Satoh T."/>
            <person name="Shirai Y."/>
            <person name="Takahashi Y."/>
            <person name="Nakagawa K."/>
            <person name="Okumura K."/>
            <person name="Nagase T."/>
            <person name="Nomura N."/>
            <person name="Kikuchi H."/>
            <person name="Masuho Y."/>
            <person name="Yamashita R."/>
            <person name="Nakai K."/>
            <person name="Yada T."/>
            <person name="Nakamura Y."/>
            <person name="Ohara O."/>
            <person name="Isogai T."/>
            <person name="Sugano S."/>
        </authorList>
    </citation>
    <scope>NUCLEOTIDE SEQUENCE [LARGE SCALE MRNA] (ISOFORMS 1 AND 2)</scope>
    <source>
        <tissue>Skeletal muscle</tissue>
        <tissue>Testis</tissue>
    </source>
</reference>
<reference key="4">
    <citation type="submission" date="2004-06" db="EMBL/GenBank/DDBJ databases">
        <title>Cloning of human full open reading frames in Gateway(TM) system entry vector (pDONR201).</title>
        <authorList>
            <person name="Ebert L."/>
            <person name="Schick M."/>
            <person name="Neubert P."/>
            <person name="Schatten R."/>
            <person name="Henze S."/>
            <person name="Korn B."/>
        </authorList>
    </citation>
    <scope>NUCLEOTIDE SEQUENCE [LARGE SCALE MRNA]</scope>
</reference>
<reference key="5">
    <citation type="journal article" date="2006" name="Nature">
        <title>The DNA sequence and biological annotation of human chromosome 1.</title>
        <authorList>
            <person name="Gregory S.G."/>
            <person name="Barlow K.F."/>
            <person name="McLay K.E."/>
            <person name="Kaul R."/>
            <person name="Swarbreck D."/>
            <person name="Dunham A."/>
            <person name="Scott C.E."/>
            <person name="Howe K.L."/>
            <person name="Woodfine K."/>
            <person name="Spencer C.C.A."/>
            <person name="Jones M.C."/>
            <person name="Gillson C."/>
            <person name="Searle S."/>
            <person name="Zhou Y."/>
            <person name="Kokocinski F."/>
            <person name="McDonald L."/>
            <person name="Evans R."/>
            <person name="Phillips K."/>
            <person name="Atkinson A."/>
            <person name="Cooper R."/>
            <person name="Jones C."/>
            <person name="Hall R.E."/>
            <person name="Andrews T.D."/>
            <person name="Lloyd C."/>
            <person name="Ainscough R."/>
            <person name="Almeida J.P."/>
            <person name="Ambrose K.D."/>
            <person name="Anderson F."/>
            <person name="Andrew R.W."/>
            <person name="Ashwell R.I.S."/>
            <person name="Aubin K."/>
            <person name="Babbage A.K."/>
            <person name="Bagguley C.L."/>
            <person name="Bailey J."/>
            <person name="Beasley H."/>
            <person name="Bethel G."/>
            <person name="Bird C.P."/>
            <person name="Bray-Allen S."/>
            <person name="Brown J.Y."/>
            <person name="Brown A.J."/>
            <person name="Buckley D."/>
            <person name="Burton J."/>
            <person name="Bye J."/>
            <person name="Carder C."/>
            <person name="Chapman J.C."/>
            <person name="Clark S.Y."/>
            <person name="Clarke G."/>
            <person name="Clee C."/>
            <person name="Cobley V."/>
            <person name="Collier R.E."/>
            <person name="Corby N."/>
            <person name="Coville G.J."/>
            <person name="Davies J."/>
            <person name="Deadman R."/>
            <person name="Dunn M."/>
            <person name="Earthrowl M."/>
            <person name="Ellington A.G."/>
            <person name="Errington H."/>
            <person name="Frankish A."/>
            <person name="Frankland J."/>
            <person name="French L."/>
            <person name="Garner P."/>
            <person name="Garnett J."/>
            <person name="Gay L."/>
            <person name="Ghori M.R.J."/>
            <person name="Gibson R."/>
            <person name="Gilby L.M."/>
            <person name="Gillett W."/>
            <person name="Glithero R.J."/>
            <person name="Grafham D.V."/>
            <person name="Griffiths C."/>
            <person name="Griffiths-Jones S."/>
            <person name="Grocock R."/>
            <person name="Hammond S."/>
            <person name="Harrison E.S.I."/>
            <person name="Hart E."/>
            <person name="Haugen E."/>
            <person name="Heath P.D."/>
            <person name="Holmes S."/>
            <person name="Holt K."/>
            <person name="Howden P.J."/>
            <person name="Hunt A.R."/>
            <person name="Hunt S.E."/>
            <person name="Hunter G."/>
            <person name="Isherwood J."/>
            <person name="James R."/>
            <person name="Johnson C."/>
            <person name="Johnson D."/>
            <person name="Joy A."/>
            <person name="Kay M."/>
            <person name="Kershaw J.K."/>
            <person name="Kibukawa M."/>
            <person name="Kimberley A.M."/>
            <person name="King A."/>
            <person name="Knights A.J."/>
            <person name="Lad H."/>
            <person name="Laird G."/>
            <person name="Lawlor S."/>
            <person name="Leongamornlert D.A."/>
            <person name="Lloyd D.M."/>
            <person name="Loveland J."/>
            <person name="Lovell J."/>
            <person name="Lush M.J."/>
            <person name="Lyne R."/>
            <person name="Martin S."/>
            <person name="Mashreghi-Mohammadi M."/>
            <person name="Matthews L."/>
            <person name="Matthews N.S.W."/>
            <person name="McLaren S."/>
            <person name="Milne S."/>
            <person name="Mistry S."/>
            <person name="Moore M.J.F."/>
            <person name="Nickerson T."/>
            <person name="O'Dell C.N."/>
            <person name="Oliver K."/>
            <person name="Palmeiri A."/>
            <person name="Palmer S.A."/>
            <person name="Parker A."/>
            <person name="Patel D."/>
            <person name="Pearce A.V."/>
            <person name="Peck A.I."/>
            <person name="Pelan S."/>
            <person name="Phelps K."/>
            <person name="Phillimore B.J."/>
            <person name="Plumb R."/>
            <person name="Rajan J."/>
            <person name="Raymond C."/>
            <person name="Rouse G."/>
            <person name="Saenphimmachak C."/>
            <person name="Sehra H.K."/>
            <person name="Sheridan E."/>
            <person name="Shownkeen R."/>
            <person name="Sims S."/>
            <person name="Skuce C.D."/>
            <person name="Smith M."/>
            <person name="Steward C."/>
            <person name="Subramanian S."/>
            <person name="Sycamore N."/>
            <person name="Tracey A."/>
            <person name="Tromans A."/>
            <person name="Van Helmond Z."/>
            <person name="Wall M."/>
            <person name="Wallis J.M."/>
            <person name="White S."/>
            <person name="Whitehead S.L."/>
            <person name="Wilkinson J.E."/>
            <person name="Willey D.L."/>
            <person name="Williams H."/>
            <person name="Wilming L."/>
            <person name="Wray P.W."/>
            <person name="Wu Z."/>
            <person name="Coulson A."/>
            <person name="Vaudin M."/>
            <person name="Sulston J.E."/>
            <person name="Durbin R.M."/>
            <person name="Hubbard T."/>
            <person name="Wooster R."/>
            <person name="Dunham I."/>
            <person name="Carter N.P."/>
            <person name="McVean G."/>
            <person name="Ross M.T."/>
            <person name="Harrow J."/>
            <person name="Olson M.V."/>
            <person name="Beck S."/>
            <person name="Rogers J."/>
            <person name="Bentley D.R."/>
        </authorList>
    </citation>
    <scope>NUCLEOTIDE SEQUENCE [LARGE SCALE GENOMIC DNA]</scope>
</reference>
<reference key="6">
    <citation type="submission" date="2005-07" db="EMBL/GenBank/DDBJ databases">
        <authorList>
            <person name="Mural R.J."/>
            <person name="Istrail S."/>
            <person name="Sutton G."/>
            <person name="Florea L."/>
            <person name="Halpern A.L."/>
            <person name="Mobarry C.M."/>
            <person name="Lippert R."/>
            <person name="Walenz B."/>
            <person name="Shatkay H."/>
            <person name="Dew I."/>
            <person name="Miller J.R."/>
            <person name="Flanigan M.J."/>
            <person name="Edwards N.J."/>
            <person name="Bolanos R."/>
            <person name="Fasulo D."/>
            <person name="Halldorsson B.V."/>
            <person name="Hannenhalli S."/>
            <person name="Turner R."/>
            <person name="Yooseph S."/>
            <person name="Lu F."/>
            <person name="Nusskern D.R."/>
            <person name="Shue B.C."/>
            <person name="Zheng X.H."/>
            <person name="Zhong F."/>
            <person name="Delcher A.L."/>
            <person name="Huson D.H."/>
            <person name="Kravitz S.A."/>
            <person name="Mouchard L."/>
            <person name="Reinert K."/>
            <person name="Remington K.A."/>
            <person name="Clark A.G."/>
            <person name="Waterman M.S."/>
            <person name="Eichler E.E."/>
            <person name="Adams M.D."/>
            <person name="Hunkapiller M.W."/>
            <person name="Myers E.W."/>
            <person name="Venter J.C."/>
        </authorList>
    </citation>
    <scope>NUCLEOTIDE SEQUENCE [LARGE SCALE GENOMIC DNA]</scope>
</reference>
<reference key="7">
    <citation type="journal article" date="2004" name="Genome Res.">
        <title>The status, quality, and expansion of the NIH full-length cDNA project: the Mammalian Gene Collection (MGC).</title>
        <authorList>
            <consortium name="The MGC Project Team"/>
        </authorList>
    </citation>
    <scope>NUCLEOTIDE SEQUENCE [LARGE SCALE MRNA] (ISOFORM 1)</scope>
    <source>
        <tissue>Brain</tissue>
    </source>
</reference>
<reference key="8">
    <citation type="journal article" date="1996" name="Genomics">
        <title>3-hydroxy-3-methylglutaryl CoA lyase (HL): mouse and human HL gene (HMGCL) cloning and detection of large gene deletions in two unrelated HL-deficient patients.</title>
        <authorList>
            <person name="Wang S.P."/>
            <person name="Robert M.-F."/>
            <person name="Gibson K.M."/>
            <person name="Wanders R.J.A."/>
            <person name="Mitchell G.A."/>
        </authorList>
    </citation>
    <scope>NUCLEOTIDE SEQUENCE [GENOMIC DNA] OF 21-325 (ISOFORM 1)</scope>
</reference>
<reference key="9">
    <citation type="journal article" date="2012" name="Mol. Biol. Rep.">
        <title>Characterization of splice variants of the genes encoding human mitochondrial HMG-CoA lyase and HMG-CoA synthase, the main enzymes of the ketogenesis pathway.</title>
        <authorList>
            <person name="Puisac B."/>
            <person name="Ramos M."/>
            <person name="Arnedo M."/>
            <person name="Menao S."/>
            <person name="Gil-Rodriguez M.C."/>
            <person name="Teresa-Rodrigo M.E."/>
            <person name="Pie A."/>
            <person name="de Karam J.C."/>
            <person name="Wesselink J.J."/>
            <person name="Gimenez I."/>
            <person name="Ramos F.J."/>
            <person name="Casals N."/>
            <person name="Gomez-Puertas P."/>
            <person name="Hegardt F.G."/>
            <person name="Pie J."/>
        </authorList>
    </citation>
    <scope>NUCLEOTIDE SEQUENCE [MRNA] OF 60-277 (ISOFORMS 2 AND 3)</scope>
    <scope>ALTERNATIVE SPLICING</scope>
    <scope>TISSUE SPECIFICITY</scope>
    <source>
        <tissue>Skeletal muscle</tissue>
    </source>
</reference>
<reference key="10">
    <citation type="journal article" date="1994" name="J. Biol. Chem.">
        <title>3-Hydroxy-3-methylglutaryl-CoA lyase is present in mouse and human liver peroxisomes.</title>
        <authorList>
            <person name="Ashmarina L.I."/>
            <person name="Rusnak N."/>
            <person name="Miziorko H.M."/>
            <person name="Mitchell G.A."/>
        </authorList>
    </citation>
    <scope>SUBCELLULAR LOCATION</scope>
</reference>
<reference key="11">
    <citation type="journal article" date="1995" name="Biochem. Soc. Trans.">
        <title>Ketogenic flux from lipids and leucine, assessment in 3-hydroxy-3-methylglutaryl CoA lyase deficiency.</title>
        <authorList>
            <person name="Holmes H.C."/>
            <person name="Burns S.P."/>
            <person name="Chalmers R.A."/>
            <person name="Bain M.S."/>
            <person name="Iles R.A."/>
        </authorList>
    </citation>
    <scope>FUNCTION</scope>
</reference>
<reference key="12">
    <citation type="journal article" date="2002" name="Arch. Biochem. Biophys.">
        <title>Investigation of the oligomeric status of the peroxisomal isoform of human 3-hydroxy-3-methylglutaryl-CoA lyase.</title>
        <authorList>
            <person name="Tuinstra R.L."/>
            <person name="Burgner J.W. II"/>
            <person name="Miziorko H.M."/>
        </authorList>
    </citation>
    <scope>SUBUNIT</scope>
    <scope>SUBCELLULAR LOCATION</scope>
    <scope>DISULFIDE BOND</scope>
    <scope>MUTAGENESIS OF CYS-323</scope>
</reference>
<reference key="13">
    <citation type="journal article" date="2003" name="J. Biol. Chem.">
        <title>Investigation of conserved acidic residues in 3-hydroxy-3-methylglutaryl-CoA lyase: implications for human disease and for functional roles in a family of related proteins.</title>
        <authorList>
            <person name="Tuinstra R.L."/>
            <person name="Miziorko H.M."/>
        </authorList>
    </citation>
    <scope>MUTAGENESIS OF GLU-37; ASP-42; GLU-72; ASP-204; HIS-233; GLU-279 AND ASP-280</scope>
    <scope>COFACTOR</scope>
    <scope>BIOPHYSICOCHEMICAL PROPERTIES</scope>
    <scope>ACTIVITY REGULATION</scope>
</reference>
<reference key="14">
    <citation type="journal article" date="2004" name="Biochemistry">
        <title>Evaluation of 3-hydroxy-3-methylglutaryl-coenzyme A lyase arginine-41 as a catalytic residue: use of acetyldithio-coenzyme A to monitor product enolization.</title>
        <authorList>
            <person name="Tuinstra R.L."/>
            <person name="Wang C.-Z."/>
            <person name="Mitchell G.A."/>
            <person name="Miziorko H.M."/>
        </authorList>
    </citation>
    <scope>MUTAGENESIS OF ARG-41; ASP-42 AND HIS-233</scope>
    <scope>BIOPHYSICOCHEMICAL PROPERTIES</scope>
</reference>
<reference key="15">
    <citation type="journal article" date="2009" name="Science">
        <title>Lysine acetylation targets protein complexes and co-regulates major cellular functions.</title>
        <authorList>
            <person name="Choudhary C."/>
            <person name="Kumar C."/>
            <person name="Gnad F."/>
            <person name="Nielsen M.L."/>
            <person name="Rehman M."/>
            <person name="Walther T.C."/>
            <person name="Olsen J.V."/>
            <person name="Mann M."/>
        </authorList>
    </citation>
    <scope>ACETYLATION [LARGE SCALE ANALYSIS] AT LYS-48</scope>
    <scope>IDENTIFICATION BY MASS SPECTROMETRY [LARGE SCALE ANALYSIS]</scope>
</reference>
<reference key="16">
    <citation type="journal article" date="2011" name="BMC Syst. Biol.">
        <title>Initial characterization of the human central proteome.</title>
        <authorList>
            <person name="Burkard T.R."/>
            <person name="Planyavsky M."/>
            <person name="Kaupe I."/>
            <person name="Breitwieser F.P."/>
            <person name="Buerckstuemmer T."/>
            <person name="Bennett K.L."/>
            <person name="Superti-Furga G."/>
            <person name="Colinge J."/>
        </authorList>
    </citation>
    <scope>IDENTIFICATION BY MASS SPECTROMETRY [LARGE SCALE ANALYSIS]</scope>
</reference>
<reference key="17">
    <citation type="journal article" date="2012" name="J. Biol. Chem.">
        <title>Identification and characterization of an extramitochondrial human 3-Hydroxy-3-methylglutaryl-CoA lyase.</title>
        <authorList>
            <person name="Montgomery C."/>
            <person name="Pei Z."/>
            <person name="Watkins P.A."/>
            <person name="Miziorko H.M."/>
        </authorList>
    </citation>
    <scope>FUNCTION</scope>
    <scope>CATALYTIC ACTIVITY</scope>
    <scope>MUTAGENESIS OF CYS-323</scope>
</reference>
<reference key="18">
    <citation type="journal article" date="2012" name="J. Lipid Res.">
        <title>Characterization of a novel HMG-CoA Lyase enzyme with a dual location in endoplasmic reticulum and cytosol.</title>
        <authorList>
            <person name="Arnedo M."/>
            <person name="Menao S."/>
            <person name="Puisac B."/>
            <person name="Teresa-Rodrigo M.E."/>
            <person name="Gil-Rodriguez M.C."/>
            <person name="Lopez-Vinas E."/>
            <person name="Gomez-Puertas P."/>
            <person name="Casals N."/>
            <person name="Casale C.H."/>
            <person name="Hegardt F.G."/>
            <person name="Pie J."/>
        </authorList>
    </citation>
    <scope>FUNCTION</scope>
    <scope>CATALYTIC ACTIVITY</scope>
</reference>
<reference key="19">
    <citation type="journal article" date="2013" name="J. Proteome Res.">
        <title>Toward a comprehensive characterization of a human cancer cell phosphoproteome.</title>
        <authorList>
            <person name="Zhou H."/>
            <person name="Di Palma S."/>
            <person name="Preisinger C."/>
            <person name="Peng M."/>
            <person name="Polat A.N."/>
            <person name="Heck A.J."/>
            <person name="Mohammed S."/>
        </authorList>
    </citation>
    <scope>IDENTIFICATION BY MASS SPECTROMETRY [LARGE SCALE ANALYSIS]</scope>
    <source>
        <tissue>Erythroleukemia</tissue>
    </source>
</reference>
<reference key="20">
    <citation type="journal article" date="2014" name="J. Proteomics">
        <title>An enzyme assisted RP-RPLC approach for in-depth analysis of human liver phosphoproteome.</title>
        <authorList>
            <person name="Bian Y."/>
            <person name="Song C."/>
            <person name="Cheng K."/>
            <person name="Dong M."/>
            <person name="Wang F."/>
            <person name="Huang J."/>
            <person name="Sun D."/>
            <person name="Wang L."/>
            <person name="Ye M."/>
            <person name="Zou H."/>
        </authorList>
    </citation>
    <scope>IDENTIFICATION BY MASS SPECTROMETRY [LARGE SCALE ANALYSIS]</scope>
    <source>
        <tissue>Liver</tissue>
    </source>
</reference>
<reference key="21">
    <citation type="journal article" date="2015" name="Proteomics">
        <title>N-terminome analysis of the human mitochondrial proteome.</title>
        <authorList>
            <person name="Vaca Jacome A.S."/>
            <person name="Rabilloud T."/>
            <person name="Schaeffer-Reiss C."/>
            <person name="Rompais M."/>
            <person name="Ayoub D."/>
            <person name="Lane L."/>
            <person name="Bairoch A."/>
            <person name="Van Dorsselaer A."/>
            <person name="Carapito C."/>
        </authorList>
    </citation>
    <scope>IDENTIFICATION BY MASS SPECTROMETRY [LARGE SCALE ANALYSIS]</scope>
</reference>
<reference key="22">
    <citation type="journal article" date="2006" name="J. Biol. Chem.">
        <title>Crystal structure of human 3-hydroxy-3-methylglutaryl-CoA Lyase: insights into catalysis and the molecular basis for hydroxymethylglutaric aciduria.</title>
        <authorList>
            <person name="Fu Z."/>
            <person name="Runquist J.A."/>
            <person name="Forouhar F."/>
            <person name="Hussain M."/>
            <person name="Hunt J.F."/>
            <person name="Miziorko H.M."/>
            <person name="Kim J.J."/>
        </authorList>
    </citation>
    <scope>X-RAY CRYSTALLOGRAPHY (2.1 ANGSTROMS) OF 28-325 IN COMPLEX WITH MAGNESIUM AND SUBSTRATE ANALOG</scope>
    <scope>HOMODIMERIZATION</scope>
</reference>
<reference key="23">
    <citation type="journal article" date="1996" name="J. Biol. Chem.">
        <title>Modeling of a mutation responsible for human 3-hydroxy-3-methylglutaryl-CoA lyase deficiency implicates histidine-233 as an active site residue.</title>
        <authorList>
            <person name="Roberts J."/>
            <person name="Mitchell G.A."/>
            <person name="Miziorko H.M."/>
        </authorList>
    </citation>
    <scope>VARIANT HMGCLD ARG-233</scope>
</reference>
<reference key="24">
    <citation type="journal article" date="1998" name="Am. J. Hum. Genet.">
        <title>HMG CoA lyase deficiency: identification of five causal point mutations in codons 41 and 42, including a frequent Saudi Arabian mutation, R41Q.</title>
        <authorList>
            <person name="Mitchell G.A."/>
            <person name="Ozand P.T."/>
            <person name="Robert M.-F."/>
            <person name="Ashmarina L."/>
            <person name="Roberts J."/>
            <person name="Gibson K.M."/>
            <person name="Wanders R.J."/>
            <person name="Wang S."/>
            <person name="Chevalier I."/>
            <person name="Ploechl E."/>
            <person name="Miziorko H."/>
        </authorList>
    </citation>
    <scope>VARIANTS HMGCLD GLN-41; GLU-42; GLY-42 AND HIS-42</scope>
</reference>
<reference key="25">
    <citation type="journal article" date="1998" name="Arch. Biochem. Biophys.">
        <title>Two missense point mutations in different alleles in the 3-hydroxy-3-methylglutaryl coenzyme A lyase gene produce 3-hydroxy-3-methylglutaric aciduria in a French patient.</title>
        <authorList>
            <person name="Zapater N."/>
            <person name="Pie J."/>
            <person name="Lloberas J."/>
            <person name="Rolland M.O."/>
            <person name="Leroux B."/>
            <person name="Vidailhet M."/>
            <person name="Divry P."/>
            <person name="Hegardt F.G."/>
            <person name="Casals N."/>
        </authorList>
    </citation>
    <scope>VARIANTS HMGCLD ARG-233 AND PRO-263</scope>
</reference>
<reference key="26">
    <citation type="journal article" date="2000" name="Hum. Genet.">
        <title>Molecular and clinical analysis of Japanese patients with 3-hydroxy-3-methylglutaryl CoA lyase (HL) deficiency.</title>
        <authorList>
            <person name="Muroi J."/>
            <person name="Yorifuji T."/>
            <person name="Uematsu A."/>
            <person name="Shigematsu Y."/>
            <person name="Onigata K."/>
            <person name="Maruyama H."/>
            <person name="Nobutoki T."/>
            <person name="Kitamura A."/>
            <person name="Nakahata T."/>
        </authorList>
    </citation>
    <scope>VARIANT HMGCLD LYS-279</scope>
</reference>
<reference key="27">
    <citation type="journal article" date="2003" name="J. Biol. Chem.">
        <title>Structural (betaalpha)8 TIM barrel model of 3-hydroxy-3-methylglutaryl-coenzyme A lyase.</title>
        <authorList>
            <person name="Casals N."/>
            <person name="Gomez-Puertas P."/>
            <person name="Pie J."/>
            <person name="Mir C."/>
            <person name="Roca R."/>
            <person name="Puisac B."/>
            <person name="Aledo R."/>
            <person name="Clotet J."/>
            <person name="Menao S."/>
            <person name="Serra D."/>
            <person name="Asins G."/>
            <person name="Till J."/>
            <person name="Elias-Jones A.C."/>
            <person name="Cresto J.C."/>
            <person name="Chamoles N.A."/>
            <person name="Abdenur J.E."/>
            <person name="Mayatepek E."/>
            <person name="Besley G."/>
            <person name="Valencia A."/>
            <person name="Hegardt F.G."/>
        </authorList>
    </citation>
    <scope>VARIANTS HMGCLD ARG-75; TYR-201 AND ASN-204</scope>
</reference>
<reference key="28">
    <citation type="journal article" date="2006" name="BMC Med. Genet.">
        <title>Mutations underlying 3-hydroxy-3-methylglutaryl CoA lyase deficiency in the Saudi population.</title>
        <authorList>
            <person name="Al-Sayed M."/>
            <person name="Imtiaz F."/>
            <person name="Alsmadi O.A."/>
            <person name="Rashed M.S."/>
            <person name="Meyer B.F."/>
        </authorList>
    </citation>
    <scope>VARIANT HMGCLD GLN-41</scope>
</reference>
<reference key="29">
    <citation type="journal article" date="2006" name="J. Inherit. Metab. Dis.">
        <title>A single-residue mutation, G203E, causes 3-hydroxy-3-methylglutaric aciduria by occluding the substrate channel in the 3D structural model of HMG-CoA lyase.</title>
        <authorList>
            <person name="Mir C."/>
            <person name="Lopez-Vinas E."/>
            <person name="Aledo R."/>
            <person name="Puisac B."/>
            <person name="Rizzo C."/>
            <person name="Dionisi-Vici C."/>
            <person name="Deodato F."/>
            <person name="Pie J."/>
            <person name="Gomez-Puertas P."/>
            <person name="Hegardt F.G."/>
            <person name="Casals N."/>
        </authorList>
    </citation>
    <scope>VARIANT HMGCLD GLU-203</scope>
    <scope>CHARACTERIZATION OF VARIANT HMGCLD GLU-203</scope>
</reference>
<reference key="30">
    <citation type="journal article" date="2007" name="Mol. Genet. Metab.">
        <title>C-terminal end and aminoacid Lys48 in HMG-CoA lyase are involved in substrate binding and enzyme activity.</title>
        <authorList>
            <person name="Carrasco P."/>
            <person name="Menao S."/>
            <person name="Lopez-Vinas E."/>
            <person name="Santpere G."/>
            <person name="Clotet J."/>
            <person name="Sierra A.Y."/>
            <person name="Gratacos E."/>
            <person name="Puisac B."/>
            <person name="Gomez-Puertas P."/>
            <person name="Hegardt F.G."/>
            <person name="Pie J."/>
            <person name="Casals N."/>
        </authorList>
    </citation>
    <scope>VARIANT HMGCLD ASN-48</scope>
    <scope>CHARACTERIZATION OF VARIANT HMGCLD ASN-48</scope>
</reference>
<reference key="31">
    <citation type="journal article" date="2009" name="Clin. Chim. Acta">
        <title>Molecular analysis of Taiwanese patients with 3-hydroxy-3-methylglutaryl CoA lyase deficiency.</title>
        <authorList>
            <person name="Lin W.D."/>
            <person name="Wang C.H."/>
            <person name="Lai C.C."/>
            <person name="Tsai Y."/>
            <person name="Wu J.Y."/>
            <person name="Chen C.P."/>
            <person name="Tsai F.J."/>
        </authorList>
    </citation>
    <scope>VARIANT HMGCLD GLN-165</scope>
</reference>
<reference key="32">
    <citation type="journal article" date="2009" name="Hum. Mutat.">
        <title>Ten novel HMGCL mutations in 24 patients of different origin with 3-hydroxy-3-methyl-glutaric aciduria.</title>
        <authorList>
            <person name="Menao S."/>
            <person name="Lopez-Vinas E."/>
            <person name="Mir C."/>
            <person name="Puisac B."/>
            <person name="Gratacos E."/>
            <person name="Arnedo M."/>
            <person name="Carrasco P."/>
            <person name="Moreno S."/>
            <person name="Ramos M."/>
            <person name="Gil M.C."/>
            <person name="Pie A."/>
            <person name="Ribes A."/>
            <person name="Perez-Cerda C."/>
            <person name="Ugarte M."/>
            <person name="Clayton P.T."/>
            <person name="Korman S.H."/>
            <person name="Serra D."/>
            <person name="Asins G."/>
            <person name="Ramos F.J."/>
            <person name="Gomez-Puertas P."/>
            <person name="Hegardt F.G."/>
            <person name="Casals N."/>
            <person name="Pie J."/>
        </authorList>
    </citation>
    <scope>VARIANTS HMGCLD LYS-37; GLY-42; PHE-142; TYR-174; SER-192; PHE-200 AND ARG-233</scope>
    <scope>CHARACTERIZATION OF VARIANTS HMGCLD LYS-37; PHE-142; TYR-174; SER-192 AND PHE-200</scope>
</reference>
<gene>
    <name type="primary">HMGCL</name>
</gene>
<dbReference type="EC" id="4.1.3.4" evidence="17 18"/>
<dbReference type="EMBL" id="L07033">
    <property type="protein sequence ID" value="AAA92733.1"/>
    <property type="molecule type" value="mRNA"/>
</dbReference>
<dbReference type="EMBL" id="AK300733">
    <property type="protein sequence ID" value="BAG62406.1"/>
    <property type="molecule type" value="mRNA"/>
</dbReference>
<dbReference type="EMBL" id="AK313869">
    <property type="protein sequence ID" value="BAG36597.1"/>
    <property type="molecule type" value="mRNA"/>
</dbReference>
<dbReference type="EMBL" id="BT009792">
    <property type="protein sequence ID" value="AAP88794.1"/>
    <property type="molecule type" value="mRNA"/>
</dbReference>
<dbReference type="EMBL" id="CR456884">
    <property type="protein sequence ID" value="CAG33165.1"/>
    <property type="molecule type" value="mRNA"/>
</dbReference>
<dbReference type="EMBL" id="AL031295">
    <property type="status" value="NOT_ANNOTATED_CDS"/>
    <property type="molecule type" value="Genomic_DNA"/>
</dbReference>
<dbReference type="EMBL" id="AL590728">
    <property type="status" value="NOT_ANNOTATED_CDS"/>
    <property type="molecule type" value="Genomic_DNA"/>
</dbReference>
<dbReference type="EMBL" id="CH471134">
    <property type="protein sequence ID" value="EAW95094.1"/>
    <property type="molecule type" value="Genomic_DNA"/>
</dbReference>
<dbReference type="EMBL" id="BC010570">
    <property type="protein sequence ID" value="AAH10570.1"/>
    <property type="molecule type" value="mRNA"/>
</dbReference>
<dbReference type="EMBL" id="AH003700">
    <property type="protein sequence ID" value="AAB19099.1"/>
    <property type="molecule type" value="Genomic_DNA"/>
</dbReference>
<dbReference type="EMBL" id="FJ472654">
    <property type="protein sequence ID" value="ACK58684.1"/>
    <property type="molecule type" value="mRNA"/>
</dbReference>
<dbReference type="EMBL" id="GU433941">
    <property type="protein sequence ID" value="ADD21697.1"/>
    <property type="molecule type" value="mRNA"/>
</dbReference>
<dbReference type="CCDS" id="CCDS243.1">
    <molecule id="P35914-1"/>
</dbReference>
<dbReference type="CCDS" id="CCDS53279.1">
    <molecule id="P35914-2"/>
</dbReference>
<dbReference type="PIR" id="A45470">
    <property type="entry name" value="A45470"/>
</dbReference>
<dbReference type="RefSeq" id="NP_000182.2">
    <molecule id="P35914-1"/>
    <property type="nucleotide sequence ID" value="NM_000191.3"/>
</dbReference>
<dbReference type="RefSeq" id="NP_001159531.1">
    <molecule id="P35914-2"/>
    <property type="nucleotide sequence ID" value="NM_001166059.2"/>
</dbReference>
<dbReference type="PDB" id="2CW6">
    <property type="method" value="X-ray"/>
    <property type="resolution" value="2.10 A"/>
    <property type="chains" value="A/B/C/D/E/F=28-325"/>
</dbReference>
<dbReference type="PDB" id="3MP3">
    <property type="method" value="X-ray"/>
    <property type="resolution" value="2.40 A"/>
    <property type="chains" value="A/B/C/D/E/F=28-325"/>
</dbReference>
<dbReference type="PDB" id="3MP4">
    <property type="method" value="X-ray"/>
    <property type="resolution" value="2.20 A"/>
    <property type="chains" value="A/B/C/D/E/F=28-325"/>
</dbReference>
<dbReference type="PDB" id="3MP5">
    <property type="method" value="X-ray"/>
    <property type="resolution" value="2.25 A"/>
    <property type="chains" value="A/B/C/D/E/F=28-325"/>
</dbReference>
<dbReference type="PDBsum" id="2CW6"/>
<dbReference type="PDBsum" id="3MP3"/>
<dbReference type="PDBsum" id="3MP4"/>
<dbReference type="PDBsum" id="3MP5"/>
<dbReference type="SMR" id="P35914"/>
<dbReference type="BioGRID" id="109398">
    <property type="interactions" value="69"/>
</dbReference>
<dbReference type="FunCoup" id="P35914">
    <property type="interactions" value="1298"/>
</dbReference>
<dbReference type="IntAct" id="P35914">
    <property type="interactions" value="29"/>
</dbReference>
<dbReference type="MINT" id="P35914"/>
<dbReference type="STRING" id="9606.ENSP00000363614"/>
<dbReference type="DrugBank" id="DB04594">
    <property type="generic name" value="3-hydroxyglutaric acid"/>
</dbReference>
<dbReference type="SwissLipids" id="SLP:000001292">
    <molecule id="P35914-1"/>
</dbReference>
<dbReference type="GlyGen" id="P35914">
    <property type="glycosylation" value="1 site, 1 O-linked glycan (1 site)"/>
</dbReference>
<dbReference type="iPTMnet" id="P35914"/>
<dbReference type="PhosphoSitePlus" id="P35914"/>
<dbReference type="SwissPalm" id="P35914"/>
<dbReference type="BioMuta" id="HMGCL"/>
<dbReference type="DMDM" id="24418852"/>
<dbReference type="jPOST" id="P35914"/>
<dbReference type="MassIVE" id="P35914"/>
<dbReference type="PaxDb" id="9606-ENSP00000363614"/>
<dbReference type="PeptideAtlas" id="P35914"/>
<dbReference type="ProteomicsDB" id="55164">
    <molecule id="P35914-1"/>
</dbReference>
<dbReference type="ProteomicsDB" id="55165">
    <molecule id="P35914-2"/>
</dbReference>
<dbReference type="Pumba" id="P35914"/>
<dbReference type="Antibodypedia" id="1373">
    <property type="antibodies" value="334 antibodies from 29 providers"/>
</dbReference>
<dbReference type="DNASU" id="3155"/>
<dbReference type="Ensembl" id="ENST00000374490.8">
    <molecule id="P35914-1"/>
    <property type="protein sequence ID" value="ENSP00000363614.3"/>
    <property type="gene ID" value="ENSG00000117305.15"/>
</dbReference>
<dbReference type="Ensembl" id="ENST00000436439.6">
    <molecule id="P35914-2"/>
    <property type="protein sequence ID" value="ENSP00000389281.2"/>
    <property type="gene ID" value="ENSG00000117305.15"/>
</dbReference>
<dbReference type="GeneID" id="3155"/>
<dbReference type="KEGG" id="hsa:3155"/>
<dbReference type="MANE-Select" id="ENST00000374490.8">
    <property type="protein sequence ID" value="ENSP00000363614.3"/>
    <property type="RefSeq nucleotide sequence ID" value="NM_000191.3"/>
    <property type="RefSeq protein sequence ID" value="NP_000182.2"/>
</dbReference>
<dbReference type="UCSC" id="uc001bib.4">
    <molecule id="P35914-1"/>
    <property type="organism name" value="human"/>
</dbReference>
<dbReference type="AGR" id="HGNC:5005"/>
<dbReference type="CTD" id="3155"/>
<dbReference type="DisGeNET" id="3155"/>
<dbReference type="GeneCards" id="HMGCL"/>
<dbReference type="HGNC" id="HGNC:5005">
    <property type="gene designation" value="HMGCL"/>
</dbReference>
<dbReference type="HPA" id="ENSG00000117305">
    <property type="expression patterns" value="Tissue enhanced (liver)"/>
</dbReference>
<dbReference type="MalaCards" id="HMGCL"/>
<dbReference type="MIM" id="246450">
    <property type="type" value="phenotype"/>
</dbReference>
<dbReference type="MIM" id="613898">
    <property type="type" value="gene"/>
</dbReference>
<dbReference type="neXtProt" id="NX_P35914"/>
<dbReference type="OpenTargets" id="ENSG00000117305"/>
<dbReference type="Orphanet" id="20">
    <property type="disease" value="3-hydroxy-3-methylglutaric aciduria"/>
</dbReference>
<dbReference type="PharmGKB" id="PA29336"/>
<dbReference type="VEuPathDB" id="HostDB:ENSG00000117305"/>
<dbReference type="eggNOG" id="KOG2368">
    <property type="taxonomic scope" value="Eukaryota"/>
</dbReference>
<dbReference type="GeneTree" id="ENSGT00940000158484"/>
<dbReference type="HOGENOM" id="CLU_022138_3_1_1"/>
<dbReference type="InParanoid" id="P35914"/>
<dbReference type="OMA" id="FQMRNTH"/>
<dbReference type="OrthoDB" id="1905920at2759"/>
<dbReference type="PAN-GO" id="P35914">
    <property type="GO annotations" value="5 GO annotations based on evolutionary models"/>
</dbReference>
<dbReference type="PhylomeDB" id="P35914"/>
<dbReference type="TreeFam" id="TF105363"/>
<dbReference type="BioCyc" id="MetaCyc:HS04116-MONOMER"/>
<dbReference type="BRENDA" id="4.1.3.4">
    <property type="organism ID" value="2681"/>
</dbReference>
<dbReference type="PathwayCommons" id="P35914"/>
<dbReference type="Reactome" id="R-HSA-77111">
    <property type="pathway name" value="Synthesis of Ketone Bodies"/>
</dbReference>
<dbReference type="Reactome" id="R-HSA-9033241">
    <property type="pathway name" value="Peroxisomal protein import"/>
</dbReference>
<dbReference type="SABIO-RK" id="P35914"/>
<dbReference type="SignaLink" id="P35914"/>
<dbReference type="UniPathway" id="UPA00896">
    <property type="reaction ID" value="UER00863"/>
</dbReference>
<dbReference type="BioGRID-ORCS" id="3155">
    <property type="hits" value="8 hits in 1168 CRISPR screens"/>
</dbReference>
<dbReference type="ChiTaRS" id="HMGCL">
    <property type="organism name" value="human"/>
</dbReference>
<dbReference type="EvolutionaryTrace" id="P35914"/>
<dbReference type="GenomeRNAi" id="3155"/>
<dbReference type="Pharos" id="P35914">
    <property type="development level" value="Tbio"/>
</dbReference>
<dbReference type="PRO" id="PR:P35914"/>
<dbReference type="Proteomes" id="UP000005640">
    <property type="component" value="Chromosome 1"/>
</dbReference>
<dbReference type="RNAct" id="P35914">
    <property type="molecule type" value="protein"/>
</dbReference>
<dbReference type="Bgee" id="ENSG00000117305">
    <property type="expression patterns" value="Expressed in right lobe of liver and 202 other cell types or tissues"/>
</dbReference>
<dbReference type="ExpressionAtlas" id="P35914">
    <property type="expression patterns" value="baseline and differential"/>
</dbReference>
<dbReference type="GO" id="GO:0005829">
    <property type="term" value="C:cytosol"/>
    <property type="evidence" value="ECO:0000304"/>
    <property type="project" value="Reactome"/>
</dbReference>
<dbReference type="GO" id="GO:0005759">
    <property type="term" value="C:mitochondrial matrix"/>
    <property type="evidence" value="ECO:0000304"/>
    <property type="project" value="Reactome"/>
</dbReference>
<dbReference type="GO" id="GO:0005739">
    <property type="term" value="C:mitochondrion"/>
    <property type="evidence" value="ECO:0000314"/>
    <property type="project" value="UniProtKB"/>
</dbReference>
<dbReference type="GO" id="GO:0005782">
    <property type="term" value="C:peroxisomal matrix"/>
    <property type="evidence" value="ECO:0000304"/>
    <property type="project" value="Reactome"/>
</dbReference>
<dbReference type="GO" id="GO:0005777">
    <property type="term" value="C:peroxisome"/>
    <property type="evidence" value="ECO:0000314"/>
    <property type="project" value="UniProtKB"/>
</dbReference>
<dbReference type="GO" id="GO:0032991">
    <property type="term" value="C:protein-containing complex"/>
    <property type="evidence" value="ECO:0000314"/>
    <property type="project" value="UniProtKB"/>
</dbReference>
<dbReference type="GO" id="GO:0004419">
    <property type="term" value="F:hydroxymethylglutaryl-CoA lyase activity"/>
    <property type="evidence" value="ECO:0000314"/>
    <property type="project" value="UniProtKB"/>
</dbReference>
<dbReference type="GO" id="GO:0000287">
    <property type="term" value="F:magnesium ion binding"/>
    <property type="evidence" value="ECO:0000314"/>
    <property type="project" value="UniProtKB"/>
</dbReference>
<dbReference type="GO" id="GO:0030145">
    <property type="term" value="F:manganese ion binding"/>
    <property type="evidence" value="ECO:0000314"/>
    <property type="project" value="UniProtKB"/>
</dbReference>
<dbReference type="GO" id="GO:0046872">
    <property type="term" value="F:metal ion binding"/>
    <property type="evidence" value="ECO:0000314"/>
    <property type="project" value="UniProtKB"/>
</dbReference>
<dbReference type="GO" id="GO:0005198">
    <property type="term" value="F:structural molecule activity"/>
    <property type="evidence" value="ECO:0000314"/>
    <property type="project" value="UniProtKB"/>
</dbReference>
<dbReference type="GO" id="GO:0046951">
    <property type="term" value="P:ketone body biosynthetic process"/>
    <property type="evidence" value="ECO:0000314"/>
    <property type="project" value="UniProtKB"/>
</dbReference>
<dbReference type="GO" id="GO:0006552">
    <property type="term" value="P:L-leucine catabolic process"/>
    <property type="evidence" value="ECO:0000318"/>
    <property type="project" value="GO_Central"/>
</dbReference>
<dbReference type="GO" id="GO:0006629">
    <property type="term" value="P:lipid metabolic process"/>
    <property type="evidence" value="ECO:0000314"/>
    <property type="project" value="BHF-UCL"/>
</dbReference>
<dbReference type="GO" id="GO:0007005">
    <property type="term" value="P:mitochondrion organization"/>
    <property type="evidence" value="ECO:0007669"/>
    <property type="project" value="Ensembl"/>
</dbReference>
<dbReference type="CDD" id="cd07938">
    <property type="entry name" value="DRE_TIM_HMGL"/>
    <property type="match status" value="1"/>
</dbReference>
<dbReference type="FunFam" id="3.20.20.70:FF:000038">
    <property type="entry name" value="Hydroxymethylglutaryl-CoA lyase, mitochondrial"/>
    <property type="match status" value="1"/>
</dbReference>
<dbReference type="Gene3D" id="3.20.20.70">
    <property type="entry name" value="Aldolase class I"/>
    <property type="match status" value="1"/>
</dbReference>
<dbReference type="InterPro" id="IPR013785">
    <property type="entry name" value="Aldolase_TIM"/>
</dbReference>
<dbReference type="InterPro" id="IPR000138">
    <property type="entry name" value="HMG_CoA_lyase_AS"/>
</dbReference>
<dbReference type="InterPro" id="IPR043594">
    <property type="entry name" value="HMGL"/>
</dbReference>
<dbReference type="InterPro" id="IPR000891">
    <property type="entry name" value="PYR_CT"/>
</dbReference>
<dbReference type="NCBIfam" id="NF004283">
    <property type="entry name" value="PRK05692.1"/>
    <property type="match status" value="1"/>
</dbReference>
<dbReference type="PANTHER" id="PTHR42738">
    <property type="entry name" value="HYDROXYMETHYLGLUTARYL-COA LYASE"/>
    <property type="match status" value="1"/>
</dbReference>
<dbReference type="PANTHER" id="PTHR42738:SF1">
    <property type="entry name" value="HYDROXYMETHYLGLUTARYL-COA LYASE, MITOCHONDRIAL"/>
    <property type="match status" value="1"/>
</dbReference>
<dbReference type="Pfam" id="PF00682">
    <property type="entry name" value="HMGL-like"/>
    <property type="match status" value="1"/>
</dbReference>
<dbReference type="SUPFAM" id="SSF51569">
    <property type="entry name" value="Aldolase"/>
    <property type="match status" value="1"/>
</dbReference>
<dbReference type="PROSITE" id="PS01062">
    <property type="entry name" value="HMG_COA_LYASE"/>
    <property type="match status" value="1"/>
</dbReference>
<dbReference type="PROSITE" id="PS50991">
    <property type="entry name" value="PYR_CT"/>
    <property type="match status" value="1"/>
</dbReference>
<accession>P35914</accession>
<accession>B4DUP4</accession>
<accession>B7UCC6</accession>
<accession>D3Y5K7</accession>
<accession>Q6IBC0</accession>
<accession>Q96FP8</accession>
<protein>
    <recommendedName>
        <fullName>Hydroxymethylglutaryl-CoA lyase, mitochondrial</fullName>
        <shortName>HL</shortName>
        <shortName>HMG-CoA lyase</shortName>
        <ecNumber evidence="17 18">4.1.3.4</ecNumber>
    </recommendedName>
    <alternativeName>
        <fullName>3-hydroxy-3-methylglutarate-CoA lyase</fullName>
    </alternativeName>
</protein>
<name>HMGCL_HUMAN</name>
<evidence type="ECO:0000250" key="1">
    <source>
        <dbReference type="UniProtKB" id="P38060"/>
    </source>
</evidence>
<evidence type="ECO:0000255" key="2"/>
<evidence type="ECO:0000255" key="3">
    <source>
        <dbReference type="PROSITE-ProRule" id="PRU01151"/>
    </source>
</evidence>
<evidence type="ECO:0000255" key="4">
    <source>
        <dbReference type="PROSITE-ProRule" id="PRU10115"/>
    </source>
</evidence>
<evidence type="ECO:0000269" key="5">
    <source>
    </source>
</evidence>
<evidence type="ECO:0000269" key="6">
    <source>
    </source>
</evidence>
<evidence type="ECO:0000269" key="7">
    <source>
    </source>
</evidence>
<evidence type="ECO:0000269" key="8">
    <source>
    </source>
</evidence>
<evidence type="ECO:0000269" key="9">
    <source>
    </source>
</evidence>
<evidence type="ECO:0000269" key="10">
    <source>
    </source>
</evidence>
<evidence type="ECO:0000269" key="11">
    <source>
    </source>
</evidence>
<evidence type="ECO:0000269" key="12">
    <source>
    </source>
</evidence>
<evidence type="ECO:0000269" key="13">
    <source>
    </source>
</evidence>
<evidence type="ECO:0000269" key="14">
    <source>
    </source>
</evidence>
<evidence type="ECO:0000269" key="15">
    <source>
    </source>
</evidence>
<evidence type="ECO:0000269" key="16">
    <source>
    </source>
</evidence>
<evidence type="ECO:0000269" key="17">
    <source>
    </source>
</evidence>
<evidence type="ECO:0000269" key="18">
    <source>
    </source>
</evidence>
<evidence type="ECO:0000269" key="19">
    <source>
    </source>
</evidence>
<evidence type="ECO:0000269" key="20">
    <source>
    </source>
</evidence>
<evidence type="ECO:0000269" key="21">
    <source>
    </source>
</evidence>
<evidence type="ECO:0000269" key="22">
    <source>
    </source>
</evidence>
<evidence type="ECO:0000303" key="23">
    <source>
    </source>
</evidence>
<evidence type="ECO:0000303" key="24">
    <source>
    </source>
</evidence>
<evidence type="ECO:0000305" key="25"/>
<evidence type="ECO:0007744" key="26">
    <source>
    </source>
</evidence>
<evidence type="ECO:0007829" key="27">
    <source>
        <dbReference type="PDB" id="2CW6"/>
    </source>
</evidence>
<organism>
    <name type="scientific">Homo sapiens</name>
    <name type="common">Human</name>
    <dbReference type="NCBI Taxonomy" id="9606"/>
    <lineage>
        <taxon>Eukaryota</taxon>
        <taxon>Metazoa</taxon>
        <taxon>Chordata</taxon>
        <taxon>Craniata</taxon>
        <taxon>Vertebrata</taxon>
        <taxon>Euteleostomi</taxon>
        <taxon>Mammalia</taxon>
        <taxon>Eutheria</taxon>
        <taxon>Euarchontoglires</taxon>
        <taxon>Primates</taxon>
        <taxon>Haplorrhini</taxon>
        <taxon>Catarrhini</taxon>
        <taxon>Hominidae</taxon>
        <taxon>Homo</taxon>
    </lineage>
</organism>
<keyword id="KW-0002">3D-structure</keyword>
<keyword id="KW-0007">Acetylation</keyword>
<keyword id="KW-0025">Alternative splicing</keyword>
<keyword id="KW-0225">Disease variant</keyword>
<keyword id="KW-1015">Disulfide bond</keyword>
<keyword id="KW-0443">Lipid metabolism</keyword>
<keyword id="KW-0456">Lyase</keyword>
<keyword id="KW-0479">Metal-binding</keyword>
<keyword id="KW-0496">Mitochondrion</keyword>
<keyword id="KW-0576">Peroxisome</keyword>
<keyword id="KW-1267">Proteomics identification</keyword>
<keyword id="KW-1185">Reference proteome</keyword>
<keyword id="KW-0809">Transit peptide</keyword>
<comment type="function">
    <text evidence="17 18 19">Mitochondrial 3-hydroxy-3-methylglutaryl-CoA lyase that catalyzes a cation-dependent cleavage of (S)-3-hydroxy-3-methylglutaryl-CoA into acetyl-CoA and acetoacetate, a key step in ketogenesis. Terminal step in leucine catabolism. Ketone bodies (beta-hydroxybutyrate, acetoacetate and acetone) are essential as an alternative source of energy to glucose, as lipid precursors and as regulators of metabolism.</text>
</comment>
<comment type="catalytic activity">
    <reaction evidence="17 18">
        <text>(3S)-3-hydroxy-3-methylglutaryl-CoA = acetoacetate + acetyl-CoA</text>
        <dbReference type="Rhea" id="RHEA:24404"/>
        <dbReference type="ChEBI" id="CHEBI:13705"/>
        <dbReference type="ChEBI" id="CHEBI:43074"/>
        <dbReference type="ChEBI" id="CHEBI:57288"/>
        <dbReference type="EC" id="4.1.3.4"/>
    </reaction>
</comment>
<comment type="cofactor">
    <cofactor evidence="8">
        <name>a divalent metal cation</name>
        <dbReference type="ChEBI" id="CHEBI:60240"/>
    </cofactor>
</comment>
<comment type="activity regulation">
    <text evidence="8">Stimulated by reducing agents such as dithiothreitol (DTT).</text>
</comment>
<comment type="biophysicochemical properties">
    <kinetics>
        <KM evidence="8 9">200 uM for magnesium ion</KM>
        <KM evidence="8 9">48 uM for HMG-CoA</KM>
        <Vmax evidence="8 9">191.0 umol/min/mg enzyme</Vmax>
    </kinetics>
</comment>
<comment type="pathway">
    <text>Metabolic intermediate metabolism; (S)-3-hydroxy-3-methylglutaryl-CoA degradation; acetoacetate from (S)-3-hydroxy-3-methylglutaryl-CoA: step 1/1.</text>
</comment>
<comment type="subunit">
    <text evidence="6 10">Homodimer; disulfide-linked. Can also form homotetramers.</text>
</comment>
<comment type="subcellular location">
    <subcellularLocation>
        <location evidence="1">Mitochondrion matrix</location>
    </subcellularLocation>
    <subcellularLocation>
        <location evidence="1">Peroxisome</location>
    </subcellularLocation>
    <text evidence="1">Unprocessed form is peroxisomal.</text>
</comment>
<comment type="alternative products">
    <event type="alternative splicing"/>
    <isoform>
        <id>P35914-1</id>
        <name>1</name>
        <sequence type="displayed"/>
    </isoform>
    <isoform>
        <id>P35914-2</id>
        <name>2</name>
        <name>HMGCS2delta5,6</name>
        <sequence type="described" ref="VSP_047444"/>
    </isoform>
    <isoform>
        <id>P35914-3</id>
        <name>3</name>
        <name>HMGCS2delta5,6,7</name>
        <sequence type="described" ref="VSP_047444 VSP_043788"/>
    </isoform>
</comment>
<comment type="tissue specificity">
    <text evidence="16">Highest expression in liver. Expressed in pancreas, kidney, intestine, testis, fibroblasts and lymphoblasts. Very low expression in brain and skeletal muscle. The relative expression of isoform 2 (at mRNA level) is highest in heart (30%), skeletal muscle (22%), and brain (14%).</text>
</comment>
<comment type="disease" evidence="5 7 11 12 13 14 15 20 21 22">
    <disease id="DI-00003">
        <name>3-hydroxy-3-methylglutaryl-CoA lyase deficiency</name>
        <acronym>HMGCLD</acronym>
        <description>An autosomal recessive disease affecting ketogenesis and L-leucine catabolism. The disease usually appears in the first year of life after a fasting period and its clinical acute symptoms include vomiting, seizures, metabolic acidosis, hypoketotic hypoglycemia and lethargy. These symptoms sometimes progress to coma, with fatal outcome in some cases.</description>
        <dbReference type="MIM" id="246450"/>
    </disease>
    <text>The disease is caused by variants affecting the gene represented in this entry.</text>
</comment>
<comment type="miscellaneous">
    <molecule>Isoform 2</molecule>
    <text evidence="25">The transcript is not translated, but would result in a catalytically impaired product if it was.</text>
</comment>
<comment type="miscellaneous">
    <molecule>Isoform 3</molecule>
    <text evidence="25">Very low expression. The transcript is not translated, but would result in a catalytically inactive product if it was.</text>
</comment>
<comment type="similarity">
    <text evidence="25">Belongs to the HMG-CoA lyase family.</text>
</comment>
<feature type="transit peptide" description="Mitochondrion">
    <location>
        <begin position="1"/>
        <end position="27"/>
    </location>
</feature>
<feature type="chain" id="PRO_0000013478" description="Hydroxymethylglutaryl-CoA lyase, mitochondrial">
    <location>
        <begin position="28"/>
        <end position="325"/>
    </location>
</feature>
<feature type="domain" description="Pyruvate carboxyltransferase" evidence="3">
    <location>
        <begin position="33"/>
        <end position="300"/>
    </location>
</feature>
<feature type="short sequence motif" description="Microbody targeting signal" evidence="2">
    <location>
        <begin position="323"/>
        <end position="325"/>
    </location>
</feature>
<feature type="active site" evidence="4">
    <location>
        <position position="266"/>
    </location>
</feature>
<feature type="binding site">
    <location>
        <position position="41"/>
    </location>
    <ligand>
        <name>substrate</name>
    </ligand>
</feature>
<feature type="binding site">
    <location>
        <position position="42"/>
    </location>
    <ligand>
        <name>a divalent metal cation</name>
        <dbReference type="ChEBI" id="CHEBI:60240"/>
    </ligand>
</feature>
<feature type="binding site">
    <location>
        <position position="233"/>
    </location>
    <ligand>
        <name>a divalent metal cation</name>
        <dbReference type="ChEBI" id="CHEBI:60240"/>
    </ligand>
</feature>
<feature type="binding site">
    <location>
        <position position="235"/>
    </location>
    <ligand>
        <name>a divalent metal cation</name>
        <dbReference type="ChEBI" id="CHEBI:60240"/>
    </ligand>
</feature>
<feature type="binding site">
    <location>
        <position position="275"/>
    </location>
    <ligand>
        <name>a divalent metal cation</name>
        <dbReference type="ChEBI" id="CHEBI:60240"/>
    </ligand>
</feature>
<feature type="modified residue" description="N6-acetyllysine; alternate" evidence="26">
    <location>
        <position position="48"/>
    </location>
</feature>
<feature type="modified residue" description="N6-succinyllysine; alternate" evidence="1">
    <location>
        <position position="48"/>
    </location>
</feature>
<feature type="modified residue" description="N6-acetyllysine" evidence="1">
    <location>
        <position position="111"/>
    </location>
</feature>
<feature type="modified residue" description="N6-acetyllysine; alternate" evidence="1">
    <location>
        <position position="137"/>
    </location>
</feature>
<feature type="modified residue" description="N6-succinyllysine; alternate" evidence="1">
    <location>
        <position position="137"/>
    </location>
</feature>
<feature type="modified residue" description="N6-acetyllysine; alternate" evidence="1">
    <location>
        <position position="179"/>
    </location>
</feature>
<feature type="modified residue" description="N6-succinyllysine; alternate" evidence="1">
    <location>
        <position position="179"/>
    </location>
</feature>
<feature type="modified residue" description="N6-acetyllysine" evidence="1">
    <location>
        <position position="324"/>
    </location>
</feature>
<feature type="disulfide bond" description="Interchain" evidence="6">
    <location>
        <position position="323"/>
    </location>
</feature>
<feature type="splice variant" id="VSP_047444" description="In isoform 2 and isoform 3." evidence="23 24">
    <location>
        <begin position="117"/>
        <end position="187"/>
    </location>
</feature>
<feature type="splice variant" id="VSP_043788" description="In isoform 3." evidence="24">
    <location>
        <begin position="188"/>
        <end position="250"/>
    </location>
</feature>
<feature type="sequence variant" id="VAR_058440" description="In HMGCLD; activity lower than 5% respect to the wild-type." evidence="15">
    <original>E</original>
    <variation>K</variation>
    <location>
        <position position="37"/>
    </location>
</feature>
<feature type="sequence variant" id="VAR_003744" description="In HMGCLD; loss of activity and of proton exchange; dbSNP:rs121964997." evidence="12 21">
    <original>R</original>
    <variation>Q</variation>
    <location>
        <position position="41"/>
    </location>
</feature>
<feature type="sequence variant" id="VAR_003745" description="In HMGCLD; reduced activity." evidence="21">
    <original>D</original>
    <variation>E</variation>
    <location>
        <position position="42"/>
    </location>
</feature>
<feature type="sequence variant" id="VAR_003746" description="In HMGCLD; loss of activity; dbSNP:rs1467902610." evidence="15 21">
    <original>D</original>
    <variation>G</variation>
    <location>
        <position position="42"/>
    </location>
</feature>
<feature type="sequence variant" id="VAR_003747" description="In HMGCLD; loss of activity." evidence="21">
    <original>D</original>
    <variation>H</variation>
    <location>
        <position position="42"/>
    </location>
</feature>
<feature type="sequence variant" id="VAR_058441" description="In HMGCLD; abolishes almost all enzymatic activity." evidence="13">
    <original>K</original>
    <variation>N</variation>
    <location>
        <position position="48"/>
    </location>
</feature>
<feature type="sequence variant" id="VAR_003748" description="In HMGCLD; dbSNP:rs121964996.">
    <original>V</original>
    <variation>L</variation>
    <location>
        <position position="70"/>
    </location>
</feature>
<feature type="sequence variant" id="VAR_058442" description="In HMGCLD; dbSNP:rs1357942068." evidence="7">
    <original>S</original>
    <variation>R</variation>
    <location>
        <position position="75"/>
    </location>
</feature>
<feature type="sequence variant" id="VAR_058443" description="In HMGCLD; activity lower than 5% respect to the wild-type." evidence="15">
    <original>S</original>
    <variation>F</variation>
    <location>
        <position position="142"/>
    </location>
</feature>
<feature type="sequence variant" id="VAR_065453" description="In HMGCLD; dbSNP:rs199587895." evidence="14">
    <original>R</original>
    <variation>Q</variation>
    <location>
        <position position="165"/>
    </location>
</feature>
<feature type="sequence variant" id="VAR_058444" description="In HMGCLD; activity lower than 5% respect to the wild-type; dbSNP:rs765475941." evidence="15">
    <original>C</original>
    <variation>Y</variation>
    <location>
        <position position="174"/>
    </location>
</feature>
<feature type="sequence variant" id="VAR_058445" description="In HMGCLD; activity lower than 5% respect to the wild-type." evidence="15">
    <original>F</original>
    <variation>S</variation>
    <location>
        <position position="192"/>
    </location>
</feature>
<feature type="sequence variant" id="VAR_058446" description="In HMGCLD; activity lower than 5% respect to the wild-type." evidence="15">
    <original>I</original>
    <variation>F</variation>
    <location>
        <position position="200"/>
    </location>
</feature>
<feature type="sequence variant" id="VAR_058447" description="In HMGCLD; dbSNP:rs760106433." evidence="7">
    <original>S</original>
    <variation>Y</variation>
    <location>
        <position position="201"/>
    </location>
</feature>
<feature type="sequence variant" id="VAR_058448" description="In HMGCLD; complete loss of activity; dbSNP:rs1553131940." evidence="11">
    <original>G</original>
    <variation>E</variation>
    <location>
        <position position="203"/>
    </location>
</feature>
<feature type="sequence variant" id="VAR_058449" description="In HMGCLD." evidence="7">
    <original>D</original>
    <variation>N</variation>
    <location>
        <position position="204"/>
    </location>
</feature>
<feature type="sequence variant" id="VAR_003749" description="In HMGCLD; loss of activity; dbSNP:rs727503963." evidence="15 20 22">
    <original>H</original>
    <variation>R</variation>
    <location>
        <position position="233"/>
    </location>
</feature>
<feature type="sequence variant" id="VAR_058450" description="In HMGCLD." evidence="22">
    <original>L</original>
    <variation>P</variation>
    <location>
        <position position="263"/>
    </location>
</feature>
<feature type="sequence variant" id="VAR_014202" description="In HMGCLD; dbSNP:rs121964998." evidence="5">
    <original>E</original>
    <variation>K</variation>
    <location>
        <position position="279"/>
    </location>
</feature>
<feature type="mutagenesis site" description="Normal activity." evidence="8">
    <original>E</original>
    <variation>D</variation>
    <location>
        <position position="37"/>
    </location>
</feature>
<feature type="mutagenesis site" description="Reduced activity, and loss of proton exchange." evidence="9">
    <original>R</original>
    <variation>M</variation>
    <location>
        <position position="41"/>
    </location>
</feature>
<feature type="mutagenesis site" description="Loss of activity, and reduced proton exchange rate." evidence="8 9">
    <original>D</original>
    <variation>A</variation>
    <variation>N</variation>
    <location>
        <position position="42"/>
    </location>
</feature>
<feature type="mutagenesis site" description="Loss of activity, and reduced affinity for metal cofactor and substrate." evidence="8">
    <original>E</original>
    <variation>A</variation>
    <location>
        <position position="72"/>
    </location>
</feature>
<feature type="mutagenesis site" description="Reduced activity, and reduced affinity for metal cofactor and substrate." evidence="8">
    <original>D</original>
    <variation>A</variation>
    <location>
        <position position="204"/>
    </location>
</feature>
<feature type="mutagenesis site" description="Loss of activity, and reduced proton exchange rate." evidence="8 9">
    <original>H</original>
    <variation>A</variation>
    <location>
        <position position="233"/>
    </location>
</feature>
<feature type="mutagenesis site" description="Loss of activity.">
    <original>C</original>
    <variation>A</variation>
    <location>
        <position position="266"/>
    </location>
</feature>
<feature type="mutagenesis site" description="Reduced thermal stability, but normal activity." evidence="8">
    <original>E</original>
    <variation>A</variation>
    <location>
        <position position="279"/>
    </location>
</feature>
<feature type="mutagenesis site" description="Normal activity." evidence="8">
    <original>D</original>
    <variation>A</variation>
    <location>
        <position position="280"/>
    </location>
</feature>
<feature type="mutagenesis site" description="Abolishes interchain homodimerization. Exhibits no DTT stimulated activity." evidence="6 18">
    <original>C</original>
    <variation>S</variation>
    <location>
        <position position="323"/>
    </location>
</feature>
<feature type="sequence conflict" description="In Ref. 1; AAA92733." evidence="25" ref="1">
    <original>A</original>
    <variation>T</variation>
    <location>
        <position position="243"/>
    </location>
</feature>
<feature type="strand" evidence="27">
    <location>
        <begin position="34"/>
        <end position="37"/>
    </location>
</feature>
<feature type="turn" evidence="27">
    <location>
        <begin position="39"/>
        <end position="41"/>
    </location>
</feature>
<feature type="helix" evidence="27">
    <location>
        <begin position="42"/>
        <end position="45"/>
    </location>
</feature>
<feature type="helix" evidence="27">
    <location>
        <begin position="53"/>
        <end position="65"/>
    </location>
</feature>
<feature type="strand" evidence="27">
    <location>
        <begin position="69"/>
        <end position="71"/>
    </location>
</feature>
<feature type="turn" evidence="27">
    <location>
        <begin position="79"/>
        <end position="81"/>
    </location>
</feature>
<feature type="helix" evidence="27">
    <location>
        <begin position="83"/>
        <end position="85"/>
    </location>
</feature>
<feature type="helix" evidence="27">
    <location>
        <begin position="88"/>
        <end position="94"/>
    </location>
</feature>
<feature type="helix" evidence="27">
    <location>
        <begin position="110"/>
        <end position="118"/>
    </location>
</feature>
<feature type="strand" evidence="27">
    <location>
        <begin position="122"/>
        <end position="130"/>
    </location>
</feature>
<feature type="helix" evidence="27">
    <location>
        <begin position="132"/>
        <end position="139"/>
    </location>
</feature>
<feature type="helix" evidence="27">
    <location>
        <begin position="143"/>
        <end position="159"/>
    </location>
</feature>
<feature type="strand" evidence="27">
    <location>
        <begin position="163"/>
        <end position="169"/>
    </location>
</feature>
<feature type="turn" evidence="27">
    <location>
        <begin position="170"/>
        <end position="172"/>
    </location>
</feature>
<feature type="turn" evidence="27">
    <location>
        <begin position="175"/>
        <end position="177"/>
    </location>
</feature>
<feature type="helix" evidence="27">
    <location>
        <begin position="182"/>
        <end position="194"/>
    </location>
</feature>
<feature type="strand" evidence="27">
    <location>
        <begin position="198"/>
        <end position="204"/>
    </location>
</feature>
<feature type="helix" evidence="27">
    <location>
        <begin position="211"/>
        <end position="224"/>
    </location>
</feature>
<feature type="helix" evidence="27">
    <location>
        <begin position="227"/>
        <end position="229"/>
    </location>
</feature>
<feature type="strand" evidence="27">
    <location>
        <begin position="230"/>
        <end position="235"/>
    </location>
</feature>
<feature type="helix" evidence="27">
    <location>
        <begin position="241"/>
        <end position="250"/>
    </location>
</feature>
<feature type="strand" evidence="27">
    <location>
        <begin position="255"/>
        <end position="259"/>
    </location>
</feature>
<feature type="helix" evidence="27">
    <location>
        <begin position="278"/>
        <end position="288"/>
    </location>
</feature>
<feature type="helix" evidence="27">
    <location>
        <begin position="296"/>
        <end position="309"/>
    </location>
</feature>
<feature type="helix" evidence="27">
    <location>
        <begin position="317"/>
        <end position="322"/>
    </location>
</feature>
<sequence length="325" mass="34360">MAAMRKALPRRLVGLASLRAVSTSSMGTLPKRVKIVEVGPRDGLQNEKNIVSTPVKIKLIDMLSEAGLSVIETTSFVSPKWVPQMGDHTEVLKGIQKFPGINYPVLTPNLKGFEAAVAAGAKEVVIFGAASELFTKKNINCSIEESFQRFDAILKAAQSANISVRGYVSCALGCPYEGKISPAKVAEVTKKFYSMGCYEISLGDTIGVGTPGIMKDMLSAVMQEVPLAALAVHCHDTYGQALANTLMALQMGVSVVDSSVAGLGGCPYAQGASGNLATEDLVYMLEGLGIHTGVNLQKLLEAGNFICQALNRKTSSKVAQATCKL</sequence>